<proteinExistence type="evidence at protein level"/>
<name>LEM2_CAEEL</name>
<organism>
    <name type="scientific">Caenorhabditis elegans</name>
    <dbReference type="NCBI Taxonomy" id="6239"/>
    <lineage>
        <taxon>Eukaryota</taxon>
        <taxon>Metazoa</taxon>
        <taxon>Ecdysozoa</taxon>
        <taxon>Nematoda</taxon>
        <taxon>Chromadorea</taxon>
        <taxon>Rhabditida</taxon>
        <taxon>Rhabditina</taxon>
        <taxon>Rhabditomorpha</taxon>
        <taxon>Rhabditoidea</taxon>
        <taxon>Rhabditidae</taxon>
        <taxon>Peloderinae</taxon>
        <taxon>Caenorhabditis</taxon>
    </lineage>
</organism>
<protein>
    <recommendedName>
        <fullName>LEM protein 2</fullName>
    </recommendedName>
    <alternativeName>
        <fullName>Ce-MAN1</fullName>
    </alternativeName>
    <alternativeName>
        <fullName>MAN1 homolog</fullName>
    </alternativeName>
</protein>
<sequence length="500" mass="55158">MVDVEKMSDAELRAELNVRGANVGPVTGTTRSLYEKKLKKLLSGGAKTPARPTVAKPAPKPTPKSAPAPKSPKSPPARRSIPRAAATAANSTINSTFNRSEIEEMSDSDDDMRDDDDDDEEILSPKSKQSSFRSANSTASSVGRGRPVSSTPNKRLSPVYKPSPVPKNTPRTTSSSSKTTINTTTTRIPSTPRRITSVPGLITDFTPSFSTFGSDRPGATPPRKSIYTSKVSKVLHDLGNTTGEEDDDDEFEGQETSRIIYKTEEPSRRGIVKNAWNKVLGYGFDASKNPGDSYDLRAGASRIRVQKNPRTGKVTVKQTNIFNEAIYFALYVILILFVVLGIAYALTTTHRPKTADFSGYWGVLKAAGRDSLNFFYNYAILPVVSLGIFVVLGAGIYFGHRKYKEAKEQEEAKLYELIERITELIRESSIDGDPYVSQPHVRDVLFPPAKRRSAELARWEQAVKFIDTNESRVATDVLVLPSGNECAVWKWIGNQSQKRW</sequence>
<comment type="function">
    <text evidence="5 7 8 9 10 11">Nuclear lamina-associated inner nuclear membrane protein that is involved in cell division, nuclear structure organization, maintenance of nuclear envelope integrity and nuclear envelope reformation after mitosis (PubMed:12684533, PubMed:21176223, PubMed:22171324, PubMed:25653391, PubMed:32271860). In interphase cells, plays a role in anchoring and spatial arrangement of chromosome arms at the nuclear periphery, forming so-called lem-2 subdomains (PubMed:21176223). Both arms of autosomes but only the left arm of the X chromosome are anchored in lem-2 subdomains; sequences bound by lem-2 are mainly repetitive chromosome sequences and inactive genes (PubMed:21176223). Involved in chromosome segregation and cell division, probably via its interaction with the nuclear intermediate filament protein lmn-1, the main component of nuclear lamina (PubMed:12684533). Required to organize the distribution of lmn-1, nuclear pore complexes (NPCs) and chromatin in mitotically active cells (PubMed:22171324). Involved in the nuclear positioning and efficient anchoring of microtubule-organizing centers (MTOCs) to the nuclear envelope during mitosis as well as on maintaining correct nuclear morphology (PubMed:25653391). Contributes to closure of nuclear envelope (NE) holes and prevents excess nuclear membranes after meiosis and mitosis (PubMed:32271860). Together with emr-1, plays a role in baf-1 enrichment at the nuclear envelope in anaphase (PubMed:12684533). Together with emr-1, involved in muscle cell attachment to hypodermal cells, as well as muscle cell location and sarcomere organization (PubMed:22171324). May play a role in radiation-induced DNA damage repair response (PubMed:22383942).</text>
</comment>
<comment type="subunit">
    <text evidence="5">Interacts with lmn-1 (PubMed:12684533). Interacts (via LEM domain and the C-terminal nuclear domain) with baf-1 (PubMed:12684533).</text>
</comment>
<comment type="interaction">
    <interactant intactId="EBI-2535391">
        <id>Q9XTB5</id>
    </interactant>
    <interactant intactId="EBI-2535603">
        <id>Q03565</id>
        <label>baf-1</label>
    </interactant>
    <organismsDiffer>false</organismsDiffer>
    <experiments>2</experiments>
</comment>
<comment type="interaction">
    <interactant intactId="EBI-2535391">
        <id>Q9XTB5</id>
    </interactant>
    <interactant intactId="EBI-314110">
        <id>Q21443</id>
        <label>lmn-1</label>
    </interactant>
    <organismsDiffer>false</organismsDiffer>
    <experiments>3</experiments>
</comment>
<comment type="subcellular location">
    <subcellularLocation>
        <location evidence="4 5">Nucleus inner membrane</location>
        <topology evidence="4 5">Multi-pass membrane protein</topology>
        <orientation evidence="13">Nucleoplasmic side</orientation>
    </subcellularLocation>
    <subcellularLocation>
        <location evidence="4 6 7 10 11 12">Nucleus envelope</location>
    </subcellularLocation>
    <subcellularLocation>
        <location evidence="6 10 11">Chromosome</location>
    </subcellularLocation>
    <text evidence="4 6 10 11 12">Remains in the nuclear envelope until mid-late anaphase and reassociates with the chromatin periphery at telophase (PubMed:10982402). Recruited to the reforming nuclear envelope initially at the apical surfaces of chromatin, from where it spreads to the lateral surfaces facing the spindle microtubules (PubMed:25653391). Requires mel-28 for chromatin reassociation after mitosis and for nuclear envelope localization (PubMed:16950114). Localizes to the nuclear envelope at non-core regions after mitosis (PubMed:35852146). In meiosis at anaphase II, appears on the chromatin surface farthest from the extruding polar body (PubMed:32271860). After anaphase II, forms a plaque on the oocyte-derived pronucleus adjacent to the meiotic spindle (PubMed:32271860). Later disperses into a uniform rim around the oocyte-derived pronucleus (PubMed:32271860).</text>
</comment>
<comment type="tissue specificity">
    <text evidence="5 10">Ubiquitous (PubMed:12684533). High expression in germline and intestine (PubMed:25653391).</text>
</comment>
<comment type="developmental stage">
    <text evidence="5 10">Expressed throughout development and in adults.</text>
</comment>
<comment type="disruption phenotype">
    <text evidence="5 8 9 10 11">Moderate increase in embryonic lethality of progeny of X-ray-irradiated adults (PubMed:22383942). Reduced lifespan to 18.6 days compared to 22 days for wild type animals (PubMed:22171324). Decreased contour ration of interphase nuclei, nuclear envelope invaginations and faster turnover of emr-1 at nuclear envelope (PubMed:25653391). Delay of daughter nuclei separation (PubMed:25653391). Two microtubule-organizing centers (MTOCs) found in close association with nuclei during nuclear separation instead of only one as in wild type animals (PubMed:25653391). RNAi-mediated knockdown leads to embryonic lethality and chromosome segregation defects in the F1 progeny (PubMed:12684533). Simultaneous knockout of lem-2 and emr-1 leads to embryonic lethality, 8.5% shorter animals in larval stage L2, abnormal gonads and a developmental stop at late L2/early L3 (PubMed:22171324). Missing cell divisions in the postembryonic mesodermal lineage and failure to produce any of the differentiated M lineage cells (PubMed:22171324). Defects in the organization of chromatin, nuclear intermediate filaments, and nuclear pore complexes (NPCs), and defects in mitosis in cells that continue to divide after embryogenesis (PubMed:22171324). In the mitotic zone of the gonad, lmn-1 and NPCs are mislocalized and nuclei are misshaped (PubMed:22171324). Misshaped nuclei with large lmn-1 aggregates, clustered NPCs and condensed chromatin in somatic hypodermal cells (PubMed:22171324). Defects in motility, sarcomere organization, and muscle attachment to hypodermis (PubMed:22171324). Decreased motility and near paralysis at day 6 (PubMed:22171324). Disorganized thin and thick filaments of sarcomeres and abnormally positioned muscles at day 3 and 6 (PubMed:22171324). Decreased pumping rate of the pharynx (PubMed:22171324). Simultaneous RNAi-mediated knockdown of lem-2 and emr-1 causes anaphase chromatin bridges and redistribution of baf-1 from the nuclear periphery to the segregating chromatin during anaphase (PubMed:12684533). RNAi-mediated knockdown in a cnep-1 mutant background leads to severe nuclear sealing defects (PubMed:32271860).</text>
</comment>
<accession>Q9XTB5</accession>
<feature type="chain" id="PRO_0000206144" description="LEM protein 2">
    <location>
        <begin position="1"/>
        <end position="500"/>
    </location>
</feature>
<feature type="topological domain" description="Nuclear" evidence="1">
    <location>
        <begin position="1"/>
        <end position="325"/>
    </location>
</feature>
<feature type="transmembrane region" description="Helical; Name=1" evidence="1">
    <location>
        <begin position="326"/>
        <end position="346"/>
    </location>
</feature>
<feature type="topological domain" description="Perinuclear space" evidence="1">
    <location>
        <begin position="347"/>
        <end position="378"/>
    </location>
</feature>
<feature type="transmembrane region" description="Helical; Name=2" evidence="1">
    <location>
        <begin position="379"/>
        <end position="399"/>
    </location>
</feature>
<feature type="topological domain" description="Nuclear" evidence="1">
    <location>
        <begin position="400"/>
        <end position="500"/>
    </location>
</feature>
<feature type="domain" description="LEM" evidence="2">
    <location>
        <begin position="1"/>
        <end position="45"/>
    </location>
</feature>
<feature type="region of interest" description="Disordered" evidence="3">
    <location>
        <begin position="39"/>
        <end position="202"/>
    </location>
</feature>
<feature type="compositionally biased region" description="Low complexity" evidence="3">
    <location>
        <begin position="46"/>
        <end position="57"/>
    </location>
</feature>
<feature type="compositionally biased region" description="Pro residues" evidence="3">
    <location>
        <begin position="58"/>
        <end position="75"/>
    </location>
</feature>
<feature type="compositionally biased region" description="Low complexity" evidence="3">
    <location>
        <begin position="77"/>
        <end position="89"/>
    </location>
</feature>
<feature type="compositionally biased region" description="Acidic residues" evidence="3">
    <location>
        <begin position="103"/>
        <end position="122"/>
    </location>
</feature>
<feature type="compositionally biased region" description="Low complexity" evidence="3">
    <location>
        <begin position="130"/>
        <end position="141"/>
    </location>
</feature>
<feature type="compositionally biased region" description="Low complexity" evidence="3">
    <location>
        <begin position="168"/>
        <end position="197"/>
    </location>
</feature>
<dbReference type="EMBL" id="BX284602">
    <property type="protein sequence ID" value="CAB03457.1"/>
    <property type="molecule type" value="Genomic_DNA"/>
</dbReference>
<dbReference type="EMBL" id="AL032634">
    <property type="protein sequence ID" value="CAB03457.1"/>
    <property type="status" value="JOINED"/>
    <property type="molecule type" value="Genomic_DNA"/>
</dbReference>
<dbReference type="PIR" id="T26067">
    <property type="entry name" value="T26067"/>
</dbReference>
<dbReference type="RefSeq" id="NP_496944.1">
    <property type="nucleotide sequence ID" value="NM_064543.3"/>
</dbReference>
<dbReference type="SMR" id="Q9XTB5"/>
<dbReference type="BioGRID" id="40342">
    <property type="interactions" value="4"/>
</dbReference>
<dbReference type="FunCoup" id="Q9XTB5">
    <property type="interactions" value="70"/>
</dbReference>
<dbReference type="IntAct" id="Q9XTB5">
    <property type="interactions" value="3"/>
</dbReference>
<dbReference type="STRING" id="6239.W01G7.5.1"/>
<dbReference type="iPTMnet" id="Q9XTB5"/>
<dbReference type="PaxDb" id="6239-W01G7.5"/>
<dbReference type="PeptideAtlas" id="Q9XTB5"/>
<dbReference type="EnsemblMetazoa" id="W01G7.5.1">
    <property type="protein sequence ID" value="W01G7.5.1"/>
    <property type="gene ID" value="WBGene00002275"/>
</dbReference>
<dbReference type="GeneID" id="175058"/>
<dbReference type="KEGG" id="cel:CELE_W01G7.5"/>
<dbReference type="UCSC" id="W01G7.5">
    <property type="organism name" value="c. elegans"/>
</dbReference>
<dbReference type="AGR" id="WB:WBGene00002275"/>
<dbReference type="CTD" id="175058"/>
<dbReference type="WormBase" id="W01G7.5">
    <property type="protein sequence ID" value="CE20129"/>
    <property type="gene ID" value="WBGene00002275"/>
    <property type="gene designation" value="lem-2"/>
</dbReference>
<dbReference type="eggNOG" id="KOG0147">
    <property type="taxonomic scope" value="Eukaryota"/>
</dbReference>
<dbReference type="GeneTree" id="ENSGT00940000171142"/>
<dbReference type="HOGENOM" id="CLU_530214_0_0_1"/>
<dbReference type="InParanoid" id="Q9XTB5"/>
<dbReference type="OMA" id="ECAVWKW"/>
<dbReference type="OrthoDB" id="118234at2759"/>
<dbReference type="PRO" id="PR:Q9XTB5"/>
<dbReference type="Proteomes" id="UP000001940">
    <property type="component" value="Chromosome II"/>
</dbReference>
<dbReference type="Bgee" id="WBGene00002275">
    <property type="expression patterns" value="Expressed in embryo and 3 other cell types or tissues"/>
</dbReference>
<dbReference type="GO" id="GO:0005694">
    <property type="term" value="C:chromosome"/>
    <property type="evidence" value="ECO:0000314"/>
    <property type="project" value="UniProtKB"/>
</dbReference>
<dbReference type="GO" id="GO:0005635">
    <property type="term" value="C:nuclear envelope"/>
    <property type="evidence" value="ECO:0000314"/>
    <property type="project" value="UniProtKB"/>
</dbReference>
<dbReference type="GO" id="GO:0005637">
    <property type="term" value="C:nuclear inner membrane"/>
    <property type="evidence" value="ECO:0007669"/>
    <property type="project" value="UniProtKB-SubCell"/>
</dbReference>
<dbReference type="GO" id="GO:0031490">
    <property type="term" value="F:chromatin DNA binding"/>
    <property type="evidence" value="ECO:0000314"/>
    <property type="project" value="WormBase"/>
</dbReference>
<dbReference type="GO" id="GO:0005521">
    <property type="term" value="F:lamin binding"/>
    <property type="evidence" value="ECO:0000314"/>
    <property type="project" value="WormBase"/>
</dbReference>
<dbReference type="GO" id="GO:0051276">
    <property type="term" value="P:chromosome organization"/>
    <property type="evidence" value="ECO:0000314"/>
    <property type="project" value="UniProtKB"/>
</dbReference>
<dbReference type="GO" id="GO:0007059">
    <property type="term" value="P:chromosome segregation"/>
    <property type="evidence" value="ECO:0000316"/>
    <property type="project" value="WormBase"/>
</dbReference>
<dbReference type="GO" id="GO:0031023">
    <property type="term" value="P:microtubule organizing center organization"/>
    <property type="evidence" value="ECO:0000315"/>
    <property type="project" value="UniProtKB"/>
</dbReference>
<dbReference type="GO" id="GO:0000281">
    <property type="term" value="P:mitotic cytokinesis"/>
    <property type="evidence" value="ECO:0000316"/>
    <property type="project" value="WormBase"/>
</dbReference>
<dbReference type="GO" id="GO:0030514">
    <property type="term" value="P:negative regulation of BMP signaling pathway"/>
    <property type="evidence" value="ECO:0000318"/>
    <property type="project" value="GO_Central"/>
</dbReference>
<dbReference type="GO" id="GO:0006998">
    <property type="term" value="P:nuclear envelope organization"/>
    <property type="evidence" value="ECO:0000315"/>
    <property type="project" value="UniProtKB"/>
</dbReference>
<dbReference type="GO" id="GO:0031468">
    <property type="term" value="P:nuclear membrane reassembly"/>
    <property type="evidence" value="ECO:0000315"/>
    <property type="project" value="UniProtKB"/>
</dbReference>
<dbReference type="GO" id="GO:0010165">
    <property type="term" value="P:response to X-ray"/>
    <property type="evidence" value="ECO:0000315"/>
    <property type="project" value="WormBase"/>
</dbReference>
<dbReference type="CDD" id="cd12940">
    <property type="entry name" value="LEM_LAP2_LEMD1"/>
    <property type="match status" value="1"/>
</dbReference>
<dbReference type="FunFam" id="1.10.720.40:FF:000001">
    <property type="entry name" value="LEM domain containing 2, isoform CRA_a"/>
    <property type="match status" value="1"/>
</dbReference>
<dbReference type="Gene3D" id="1.10.720.40">
    <property type="match status" value="1"/>
</dbReference>
<dbReference type="Gene3D" id="1.10.10.1180">
    <property type="entry name" value="MAN1, winged-helix domain"/>
    <property type="match status" value="1"/>
</dbReference>
<dbReference type="InterPro" id="IPR052277">
    <property type="entry name" value="INM_ESCRT-Associated"/>
</dbReference>
<dbReference type="InterPro" id="IPR011015">
    <property type="entry name" value="LEM/LEM-like_dom_sf"/>
</dbReference>
<dbReference type="InterPro" id="IPR003887">
    <property type="entry name" value="LEM_dom"/>
</dbReference>
<dbReference type="InterPro" id="IPR041885">
    <property type="entry name" value="MAN1_winged_helix_dom"/>
</dbReference>
<dbReference type="PANTHER" id="PTHR13428:SF12">
    <property type="entry name" value="INNER NUCLEAR MEMBRANE PROTEIN MAN1"/>
    <property type="match status" value="1"/>
</dbReference>
<dbReference type="PANTHER" id="PTHR13428">
    <property type="entry name" value="INNER NUCLEAR MEMBRANE PROTEIN MAN1 LEM DOMAIN CONTAINING PROTEIN"/>
    <property type="match status" value="1"/>
</dbReference>
<dbReference type="Pfam" id="PF03020">
    <property type="entry name" value="LEM"/>
    <property type="match status" value="1"/>
</dbReference>
<dbReference type="SMART" id="SM00540">
    <property type="entry name" value="LEM"/>
    <property type="match status" value="1"/>
</dbReference>
<dbReference type="SUPFAM" id="SSF63451">
    <property type="entry name" value="LEM domain"/>
    <property type="match status" value="1"/>
</dbReference>
<dbReference type="PROSITE" id="PS50954">
    <property type="entry name" value="LEM"/>
    <property type="match status" value="1"/>
</dbReference>
<reference key="1">
    <citation type="journal article" date="1998" name="Science">
        <title>Genome sequence of the nematode C. elegans: a platform for investigating biology.</title>
        <authorList>
            <consortium name="The C. elegans sequencing consortium"/>
        </authorList>
    </citation>
    <scope>NUCLEOTIDE SEQUENCE [LARGE SCALE GENOMIC DNA]</scope>
    <source>
        <strain>Bristol N2</strain>
    </source>
</reference>
<reference key="2">
    <citation type="journal article" date="2000" name="Mol. Biol. Cell">
        <title>C. elegans nuclear envelope proteins emerin, MAN1, lamin, and nucleoporins reveal unique timing of nuclear envelope breakdown during mitosis.</title>
        <authorList>
            <person name="Lee K.K."/>
            <person name="Gruenbaum Y."/>
            <person name="Spann P."/>
            <person name="Liu J."/>
            <person name="Wilson K.L."/>
        </authorList>
    </citation>
    <scope>SUBCELLULAR LOCATION</scope>
</reference>
<reference key="3">
    <citation type="journal article" date="2003" name="Proc. Natl. Acad. Sci. U.S.A.">
        <title>MAN1 and emerin have overlapping function(s) essential for chromosome segregation and cell division in Caenorhabditis elegans.</title>
        <authorList>
            <person name="Liu J."/>
            <person name="Lee K.K."/>
            <person name="Segura-Totten M."/>
            <person name="Neufeld E."/>
            <person name="Wilson K.L."/>
            <person name="Gruenbaum Y."/>
        </authorList>
    </citation>
    <scope>FUNCTION</scope>
    <scope>SUBCELLULAR LOCATION</scope>
    <scope>TISSUE SPECIFICITY</scope>
    <scope>DEVELOPMENTAL STAGE</scope>
    <scope>INTERACTION WITH LMN-1 AND BAF-1</scope>
    <scope>DISRUPTION PHENOTYPE</scope>
</reference>
<reference key="4">
    <citation type="journal article" date="2006" name="Curr. Biol.">
        <title>MEL-28, a novel nuclear-envelope and kinetochore protein essential for zygotic nuclear-envelope assembly in C. elegans.</title>
        <authorList>
            <person name="Galy V."/>
            <person name="Askjaer P."/>
            <person name="Franz C."/>
            <person name="Lopez-Iglesias C."/>
            <person name="Mattaj I.W."/>
        </authorList>
    </citation>
    <scope>SUBCELLULAR LOCATION</scope>
</reference>
<reference key="5">
    <citation type="journal article" date="2010" name="Genome Biol.">
        <title>Caenorhabditis elegans chromosome arms are anchored to the nuclear membrane via discontinuous association with LEM-2.</title>
        <authorList>
            <person name="Ikegami K."/>
            <person name="Egelhofer T.A."/>
            <person name="Strome S."/>
            <person name="Lieb J.D."/>
        </authorList>
    </citation>
    <scope>FUNCTION</scope>
    <scope>SUBCELLULAR LOCATION</scope>
</reference>
<reference key="6">
    <citation type="journal article" date="2012" name="Mol. Biol. Cell">
        <title>Ce-emerin and LEM-2: essential roles in Caenorhabditis elegans development, muscle function, and mitosis.</title>
        <authorList>
            <person name="Barkan R."/>
            <person name="Zahand A.J."/>
            <person name="Sharabi K."/>
            <person name="Lamm A.T."/>
            <person name="Feinstein N."/>
            <person name="Haithcock E."/>
            <person name="Wilson K.L."/>
            <person name="Liu J."/>
            <person name="Gruenbaum Y."/>
        </authorList>
    </citation>
    <scope>FUNCTION</scope>
    <scope>DISRUPTION PHENOTYPE</scope>
</reference>
<reference key="7">
    <citation type="journal article" date="2012" name="PLoS ONE">
        <title>LEM-3 - a LEM domain containing nuclease involved in the DNA damage response in C. elegans.</title>
        <authorList>
            <person name="Dittrich C.M."/>
            <person name="Kratz K."/>
            <person name="Sendoel A."/>
            <person name="Gruenbaum Y."/>
            <person name="Jiricny J."/>
            <person name="Hengartner M.O."/>
        </authorList>
    </citation>
    <scope>FUNCTION</scope>
    <scope>DISRUPTION PHENOTYPE</scope>
</reference>
<reference key="8">
    <citation type="journal article" date="2015" name="J. Cell Sci.">
        <title>Inner nuclear membrane protein LEM-2 is required for correct nuclear separation and morphology in C. elegans.</title>
        <authorList>
            <person name="Morales-Martinez A."/>
            <person name="Dobrzynska A."/>
            <person name="Askjaer P."/>
        </authorList>
    </citation>
    <scope>FUNCTION</scope>
    <scope>SUBCELLULAR LOCATION</scope>
    <scope>TISSUE SPECIFICITY</scope>
    <scope>DEVELOPMENTAL STAGE</scope>
    <scope>DISRUPTION PHENOTYPE</scope>
</reference>
<reference key="9">
    <citation type="journal article" date="2020" name="J. Cell Biol.">
        <title>Regulated lipid synthesis and LEM2/CHMP7 jointly control nuclear envelope closure.</title>
        <authorList>
            <person name="Penfield L."/>
            <person name="Shankar R."/>
            <person name="Szentgyoergyi E."/>
            <person name="Laffitte A."/>
            <person name="Mauro M.S."/>
            <person name="Audhya A."/>
            <person name="Mueller-Reichert T."/>
            <person name="Bahmanyar S."/>
        </authorList>
    </citation>
    <scope>FUNCTION</scope>
    <scope>SUBCELLULAR LOCATION</scope>
    <scope>DISRUPTION PHENOTYPE</scope>
</reference>
<reference key="10">
    <citation type="journal article" date="2022" name="Elife">
        <title>Ndc1 drives nuclear pore complex assembly independent of membrane biogenesis to promote nuclear formation and growth.</title>
        <authorList>
            <person name="Mauro M.S."/>
            <person name="Celma G."/>
            <person name="Zimyanin V."/>
            <person name="Magaj M.M."/>
            <person name="Gibson K.H."/>
            <person name="Redemann S."/>
            <person name="Bahmanyar S."/>
        </authorList>
    </citation>
    <scope>SUBCELLULAR LOCATION</scope>
</reference>
<evidence type="ECO:0000255" key="1"/>
<evidence type="ECO:0000255" key="2">
    <source>
        <dbReference type="PROSITE-ProRule" id="PRU00313"/>
    </source>
</evidence>
<evidence type="ECO:0000256" key="3">
    <source>
        <dbReference type="SAM" id="MobiDB-lite"/>
    </source>
</evidence>
<evidence type="ECO:0000269" key="4">
    <source>
    </source>
</evidence>
<evidence type="ECO:0000269" key="5">
    <source>
    </source>
</evidence>
<evidence type="ECO:0000269" key="6">
    <source>
    </source>
</evidence>
<evidence type="ECO:0000269" key="7">
    <source>
    </source>
</evidence>
<evidence type="ECO:0000269" key="8">
    <source>
    </source>
</evidence>
<evidence type="ECO:0000269" key="9">
    <source>
    </source>
</evidence>
<evidence type="ECO:0000269" key="10">
    <source>
    </source>
</evidence>
<evidence type="ECO:0000269" key="11">
    <source>
    </source>
</evidence>
<evidence type="ECO:0000269" key="12">
    <source>
    </source>
</evidence>
<evidence type="ECO:0000305" key="13"/>
<gene>
    <name type="primary">lem-2</name>
    <name type="ORF">W01G7.5</name>
</gene>
<keyword id="KW-0131">Cell cycle</keyword>
<keyword id="KW-0158">Chromosome</keyword>
<keyword id="KW-0472">Membrane</keyword>
<keyword id="KW-0539">Nucleus</keyword>
<keyword id="KW-1185">Reference proteome</keyword>
<keyword id="KW-0812">Transmembrane</keyword>
<keyword id="KW-1133">Transmembrane helix</keyword>